<organism>
    <name type="scientific">Shewanella sediminis (strain HAW-EB3)</name>
    <dbReference type="NCBI Taxonomy" id="425104"/>
    <lineage>
        <taxon>Bacteria</taxon>
        <taxon>Pseudomonadati</taxon>
        <taxon>Pseudomonadota</taxon>
        <taxon>Gammaproteobacteria</taxon>
        <taxon>Alteromonadales</taxon>
        <taxon>Shewanellaceae</taxon>
        <taxon>Shewanella</taxon>
    </lineage>
</organism>
<reference key="1">
    <citation type="submission" date="2007-08" db="EMBL/GenBank/DDBJ databases">
        <title>Complete sequence of Shewanella sediminis HAW-EB3.</title>
        <authorList>
            <consortium name="US DOE Joint Genome Institute"/>
            <person name="Copeland A."/>
            <person name="Lucas S."/>
            <person name="Lapidus A."/>
            <person name="Barry K."/>
            <person name="Glavina del Rio T."/>
            <person name="Dalin E."/>
            <person name="Tice H."/>
            <person name="Pitluck S."/>
            <person name="Chertkov O."/>
            <person name="Brettin T."/>
            <person name="Bruce D."/>
            <person name="Detter J.C."/>
            <person name="Han C."/>
            <person name="Schmutz J."/>
            <person name="Larimer F."/>
            <person name="Land M."/>
            <person name="Hauser L."/>
            <person name="Kyrpides N."/>
            <person name="Kim E."/>
            <person name="Zhao J.-S."/>
            <person name="Richardson P."/>
        </authorList>
    </citation>
    <scope>NUCLEOTIDE SEQUENCE [LARGE SCALE GENOMIC DNA]</scope>
    <source>
        <strain>HAW-EB3</strain>
    </source>
</reference>
<proteinExistence type="inferred from homology"/>
<feature type="chain" id="PRO_1000078550" description="Glycine--tRNA ligase beta subunit">
    <location>
        <begin position="1"/>
        <end position="689"/>
    </location>
</feature>
<sequence>MNFENLLIEVGTEELPPKSLRKLAESFLSNFTDELKKAELSFESAVWHAAPRRLAICVNQLALAQADKVVEKRGPAIAQAFDTDGNPTKAAMGWARGNGITVEQAGRLKTDKGEWLLHQAKVVGVETKSLIAAMAQRSLDKLPIPKPMRWGNNTTQFIRPVHTVTMLLGSEVVEGELLGQKSARIIRGHRFMGKASFELVHADNYLSALKEQGKVEANYEVRKALIKAGAEAAAAKIGGVADLEDDLLEEVTSLVEWPVVLTANFEEKFLDVPAEALVYTMKGDQKYFPVFDKAGQLMPNFIFVTNIESKDPQQIIAGNERVVRPRLADAEFFFETDKKDSLESRLTSLETVIFQKQLGTIKDRVARISDMAGFIANSIDANADEAARAGLLSKSDLMTNMVMEFTDLQGTMGMHYARLNGETEAVALALQEQYKPKFSGDTVPTAPVSVCVALAEKLDTLVGIFGIGQAPKGAADPFALRRAAIGILRICVENNLPLNLIDLIAKAQELHGSNLTNDKAAEQVLEFFMGRFRAWYQDQGVSVDVILAVLARRPTSPADFDSRIKAVSHFRSLEQASALAAANKRVSNILAKVEGELPAAIDAGLLVENAEKVLAEKLNELQPQLAPLFAAANYQEALALLADLRESVDTFFEDVMVMADDEALKNNRLALLSSLREQFLHAADISLLQ</sequence>
<dbReference type="EC" id="6.1.1.14" evidence="1"/>
<dbReference type="EMBL" id="CP000821">
    <property type="protein sequence ID" value="ABV34627.1"/>
    <property type="molecule type" value="Genomic_DNA"/>
</dbReference>
<dbReference type="RefSeq" id="WP_012004153.1">
    <property type="nucleotide sequence ID" value="NC_009831.1"/>
</dbReference>
<dbReference type="SMR" id="A8FP54"/>
<dbReference type="STRING" id="425104.Ssed_0014"/>
<dbReference type="KEGG" id="sse:Ssed_0014"/>
<dbReference type="eggNOG" id="COG0751">
    <property type="taxonomic scope" value="Bacteria"/>
</dbReference>
<dbReference type="HOGENOM" id="CLU_007220_2_2_6"/>
<dbReference type="OrthoDB" id="9775440at2"/>
<dbReference type="Proteomes" id="UP000002015">
    <property type="component" value="Chromosome"/>
</dbReference>
<dbReference type="GO" id="GO:0005829">
    <property type="term" value="C:cytosol"/>
    <property type="evidence" value="ECO:0007669"/>
    <property type="project" value="TreeGrafter"/>
</dbReference>
<dbReference type="GO" id="GO:0004814">
    <property type="term" value="F:arginine-tRNA ligase activity"/>
    <property type="evidence" value="ECO:0007669"/>
    <property type="project" value="InterPro"/>
</dbReference>
<dbReference type="GO" id="GO:0005524">
    <property type="term" value="F:ATP binding"/>
    <property type="evidence" value="ECO:0007669"/>
    <property type="project" value="UniProtKB-UniRule"/>
</dbReference>
<dbReference type="GO" id="GO:0004820">
    <property type="term" value="F:glycine-tRNA ligase activity"/>
    <property type="evidence" value="ECO:0007669"/>
    <property type="project" value="UniProtKB-UniRule"/>
</dbReference>
<dbReference type="GO" id="GO:0006420">
    <property type="term" value="P:arginyl-tRNA aminoacylation"/>
    <property type="evidence" value="ECO:0007669"/>
    <property type="project" value="InterPro"/>
</dbReference>
<dbReference type="GO" id="GO:0006426">
    <property type="term" value="P:glycyl-tRNA aminoacylation"/>
    <property type="evidence" value="ECO:0007669"/>
    <property type="project" value="UniProtKB-UniRule"/>
</dbReference>
<dbReference type="HAMAP" id="MF_00255">
    <property type="entry name" value="Gly_tRNA_synth_beta"/>
    <property type="match status" value="1"/>
</dbReference>
<dbReference type="InterPro" id="IPR008909">
    <property type="entry name" value="DALR_anticod-bd"/>
</dbReference>
<dbReference type="InterPro" id="IPR015944">
    <property type="entry name" value="Gly-tRNA-synth_bsu"/>
</dbReference>
<dbReference type="InterPro" id="IPR006194">
    <property type="entry name" value="Gly-tRNA-synth_heterodimer"/>
</dbReference>
<dbReference type="NCBIfam" id="TIGR00211">
    <property type="entry name" value="glyS"/>
    <property type="match status" value="1"/>
</dbReference>
<dbReference type="PANTHER" id="PTHR30075:SF2">
    <property type="entry name" value="GLYCINE--TRNA LIGASE, CHLOROPLASTIC_MITOCHONDRIAL 2"/>
    <property type="match status" value="1"/>
</dbReference>
<dbReference type="PANTHER" id="PTHR30075">
    <property type="entry name" value="GLYCYL-TRNA SYNTHETASE"/>
    <property type="match status" value="1"/>
</dbReference>
<dbReference type="Pfam" id="PF05746">
    <property type="entry name" value="DALR_1"/>
    <property type="match status" value="1"/>
</dbReference>
<dbReference type="Pfam" id="PF02092">
    <property type="entry name" value="tRNA_synt_2f"/>
    <property type="match status" value="1"/>
</dbReference>
<dbReference type="PRINTS" id="PR01045">
    <property type="entry name" value="TRNASYNTHGB"/>
</dbReference>
<dbReference type="SMART" id="SM00836">
    <property type="entry name" value="DALR_1"/>
    <property type="match status" value="1"/>
</dbReference>
<dbReference type="SUPFAM" id="SSF109604">
    <property type="entry name" value="HD-domain/PDEase-like"/>
    <property type="match status" value="1"/>
</dbReference>
<dbReference type="PROSITE" id="PS50861">
    <property type="entry name" value="AA_TRNA_LIGASE_II_GLYAB"/>
    <property type="match status" value="1"/>
</dbReference>
<comment type="catalytic activity">
    <reaction evidence="1">
        <text>tRNA(Gly) + glycine + ATP = glycyl-tRNA(Gly) + AMP + diphosphate</text>
        <dbReference type="Rhea" id="RHEA:16013"/>
        <dbReference type="Rhea" id="RHEA-COMP:9664"/>
        <dbReference type="Rhea" id="RHEA-COMP:9683"/>
        <dbReference type="ChEBI" id="CHEBI:30616"/>
        <dbReference type="ChEBI" id="CHEBI:33019"/>
        <dbReference type="ChEBI" id="CHEBI:57305"/>
        <dbReference type="ChEBI" id="CHEBI:78442"/>
        <dbReference type="ChEBI" id="CHEBI:78522"/>
        <dbReference type="ChEBI" id="CHEBI:456215"/>
        <dbReference type="EC" id="6.1.1.14"/>
    </reaction>
</comment>
<comment type="subunit">
    <text evidence="1">Tetramer of two alpha and two beta subunits.</text>
</comment>
<comment type="subcellular location">
    <subcellularLocation>
        <location evidence="1">Cytoplasm</location>
    </subcellularLocation>
</comment>
<comment type="similarity">
    <text evidence="1">Belongs to the class-II aminoacyl-tRNA synthetase family.</text>
</comment>
<accession>A8FP54</accession>
<protein>
    <recommendedName>
        <fullName evidence="1">Glycine--tRNA ligase beta subunit</fullName>
        <ecNumber evidence="1">6.1.1.14</ecNumber>
    </recommendedName>
    <alternativeName>
        <fullName evidence="1">Glycyl-tRNA synthetase beta subunit</fullName>
        <shortName evidence="1">GlyRS</shortName>
    </alternativeName>
</protein>
<gene>
    <name evidence="1" type="primary">glyS</name>
    <name type="ordered locus">Ssed_0014</name>
</gene>
<evidence type="ECO:0000255" key="1">
    <source>
        <dbReference type="HAMAP-Rule" id="MF_00255"/>
    </source>
</evidence>
<keyword id="KW-0030">Aminoacyl-tRNA synthetase</keyword>
<keyword id="KW-0067">ATP-binding</keyword>
<keyword id="KW-0963">Cytoplasm</keyword>
<keyword id="KW-0436">Ligase</keyword>
<keyword id="KW-0547">Nucleotide-binding</keyword>
<keyword id="KW-0648">Protein biosynthesis</keyword>
<keyword id="KW-1185">Reference proteome</keyword>
<name>SYGB_SHESH</name>